<comment type="function">
    <text evidence="1">One of several proteins that assist in the late maturation steps of the functional core of the 30S ribosomal subunit. Associates with free 30S ribosomal subunits (but not with 30S subunits that are part of 70S ribosomes or polysomes). Required for efficient processing of 16S rRNA. May interact with the 5'-terminal helix region of 16S rRNA.</text>
</comment>
<comment type="subunit">
    <text evidence="1">Monomer. Binds 30S ribosomal subunits, but not 50S ribosomal subunits or 70S ribosomes.</text>
</comment>
<comment type="subcellular location">
    <subcellularLocation>
        <location evidence="1">Cytoplasm</location>
    </subcellularLocation>
</comment>
<comment type="similarity">
    <text evidence="1">Belongs to the RbfA family.</text>
</comment>
<gene>
    <name evidence="1" type="primary">rbfA</name>
    <name type="ordered locus">Fphi_0949</name>
</gene>
<name>RBFA_FRAP2</name>
<reference key="1">
    <citation type="submission" date="2007-12" db="EMBL/GenBank/DDBJ databases">
        <title>Complete sequence of chromosome of Francisella philomiragia subsp. philomiragia ATCC 25017.</title>
        <authorList>
            <consortium name="US DOE Joint Genome Institute"/>
            <person name="Copeland A."/>
            <person name="Lucas S."/>
            <person name="Lapidus A."/>
            <person name="Barry K."/>
            <person name="Detter J.C."/>
            <person name="Glavina del Rio T."/>
            <person name="Hammon N."/>
            <person name="Israni S."/>
            <person name="Dalin E."/>
            <person name="Tice H."/>
            <person name="Pitluck S."/>
            <person name="Chain P."/>
            <person name="Malfatti S."/>
            <person name="Shin M."/>
            <person name="Vergez L."/>
            <person name="Schmutz J."/>
            <person name="Larimer F."/>
            <person name="Land M."/>
            <person name="Hauser L."/>
            <person name="Richardson P."/>
        </authorList>
    </citation>
    <scope>NUCLEOTIDE SEQUENCE [LARGE SCALE GENOMIC DNA]</scope>
    <source>
        <strain>ATCC 25017 / CCUG 19701 / FSC 153 / O#319-036</strain>
    </source>
</reference>
<dbReference type="EMBL" id="CP000937">
    <property type="protein sequence ID" value="ABZ87172.1"/>
    <property type="molecule type" value="Genomic_DNA"/>
</dbReference>
<dbReference type="SMR" id="B0TWR4"/>
<dbReference type="KEGG" id="fph:Fphi_0949"/>
<dbReference type="eggNOG" id="COG0858">
    <property type="taxonomic scope" value="Bacteria"/>
</dbReference>
<dbReference type="HOGENOM" id="CLU_089475_5_0_6"/>
<dbReference type="GO" id="GO:0005829">
    <property type="term" value="C:cytosol"/>
    <property type="evidence" value="ECO:0007669"/>
    <property type="project" value="TreeGrafter"/>
</dbReference>
<dbReference type="GO" id="GO:0043024">
    <property type="term" value="F:ribosomal small subunit binding"/>
    <property type="evidence" value="ECO:0007669"/>
    <property type="project" value="TreeGrafter"/>
</dbReference>
<dbReference type="GO" id="GO:0030490">
    <property type="term" value="P:maturation of SSU-rRNA"/>
    <property type="evidence" value="ECO:0007669"/>
    <property type="project" value="UniProtKB-UniRule"/>
</dbReference>
<dbReference type="Gene3D" id="3.30.300.20">
    <property type="match status" value="1"/>
</dbReference>
<dbReference type="HAMAP" id="MF_00003">
    <property type="entry name" value="RbfA"/>
    <property type="match status" value="1"/>
</dbReference>
<dbReference type="InterPro" id="IPR015946">
    <property type="entry name" value="KH_dom-like_a/b"/>
</dbReference>
<dbReference type="InterPro" id="IPR000238">
    <property type="entry name" value="RbfA"/>
</dbReference>
<dbReference type="InterPro" id="IPR023799">
    <property type="entry name" value="RbfA_dom_sf"/>
</dbReference>
<dbReference type="InterPro" id="IPR020053">
    <property type="entry name" value="Ribosome-bd_factorA_CS"/>
</dbReference>
<dbReference type="NCBIfam" id="TIGR00082">
    <property type="entry name" value="rbfA"/>
    <property type="match status" value="1"/>
</dbReference>
<dbReference type="PANTHER" id="PTHR33515">
    <property type="entry name" value="RIBOSOME-BINDING FACTOR A, CHLOROPLASTIC-RELATED"/>
    <property type="match status" value="1"/>
</dbReference>
<dbReference type="PANTHER" id="PTHR33515:SF1">
    <property type="entry name" value="RIBOSOME-BINDING FACTOR A, CHLOROPLASTIC-RELATED"/>
    <property type="match status" value="1"/>
</dbReference>
<dbReference type="Pfam" id="PF02033">
    <property type="entry name" value="RBFA"/>
    <property type="match status" value="1"/>
</dbReference>
<dbReference type="SUPFAM" id="SSF89919">
    <property type="entry name" value="Ribosome-binding factor A, RbfA"/>
    <property type="match status" value="1"/>
</dbReference>
<dbReference type="PROSITE" id="PS01319">
    <property type="entry name" value="RBFA"/>
    <property type="match status" value="1"/>
</dbReference>
<keyword id="KW-0963">Cytoplasm</keyword>
<keyword id="KW-0690">Ribosome biogenesis</keyword>
<feature type="chain" id="PRO_1000073763" description="Ribosome-binding factor A">
    <location>
        <begin position="1"/>
        <end position="143"/>
    </location>
</feature>
<feature type="region of interest" description="Disordered" evidence="2">
    <location>
        <begin position="123"/>
        <end position="143"/>
    </location>
</feature>
<organism>
    <name type="scientific">Francisella philomiragia subsp. philomiragia (strain ATCC 25017 / CCUG 19701 / FSC 153 / O#319-036)</name>
    <dbReference type="NCBI Taxonomy" id="484022"/>
    <lineage>
        <taxon>Bacteria</taxon>
        <taxon>Pseudomonadati</taxon>
        <taxon>Pseudomonadota</taxon>
        <taxon>Gammaproteobacteria</taxon>
        <taxon>Thiotrichales</taxon>
        <taxon>Francisellaceae</taxon>
        <taxon>Francisella</taxon>
    </lineage>
</organism>
<evidence type="ECO:0000255" key="1">
    <source>
        <dbReference type="HAMAP-Rule" id="MF_00003"/>
    </source>
</evidence>
<evidence type="ECO:0000256" key="2">
    <source>
        <dbReference type="SAM" id="MobiDB-lite"/>
    </source>
</evidence>
<accession>B0TWR4</accession>
<protein>
    <recommendedName>
        <fullName evidence="1">Ribosome-binding factor A</fullName>
    </recommendedName>
</protein>
<proteinExistence type="inferred from homology"/>
<sequence length="143" mass="16355">MAAEGRVQRVASELQKVISLLLRTKIKDSKLATATITEVELSKDLSYAKVYYTCLDIQEAQYISKAFEKSKGFFRSSIAKSLNLRIVPNLKFVYDKSLDYGMEMEGKIQQALEADSKIIKQDDNSLQENYKDSDKETKVEKLR</sequence>